<name>GCH1_RICRS</name>
<dbReference type="EC" id="3.5.4.16" evidence="2"/>
<dbReference type="EMBL" id="CP000848">
    <property type="protein sequence ID" value="ABV76135.1"/>
    <property type="molecule type" value="Genomic_DNA"/>
</dbReference>
<dbReference type="RefSeq" id="WP_012150725.1">
    <property type="nucleotide sequence ID" value="NZ_CP121767.1"/>
</dbReference>
<dbReference type="SMR" id="A8GRW0"/>
<dbReference type="GeneID" id="79937283"/>
<dbReference type="KEGG" id="rri:A1G_02990"/>
<dbReference type="HOGENOM" id="CLU_049768_3_1_5"/>
<dbReference type="UniPathway" id="UPA00848">
    <property type="reaction ID" value="UER00151"/>
</dbReference>
<dbReference type="Proteomes" id="UP000006832">
    <property type="component" value="Chromosome"/>
</dbReference>
<dbReference type="GO" id="GO:0005737">
    <property type="term" value="C:cytoplasm"/>
    <property type="evidence" value="ECO:0007669"/>
    <property type="project" value="TreeGrafter"/>
</dbReference>
<dbReference type="GO" id="GO:0005525">
    <property type="term" value="F:GTP binding"/>
    <property type="evidence" value="ECO:0007669"/>
    <property type="project" value="UniProtKB-KW"/>
</dbReference>
<dbReference type="GO" id="GO:0003934">
    <property type="term" value="F:GTP cyclohydrolase I activity"/>
    <property type="evidence" value="ECO:0007669"/>
    <property type="project" value="UniProtKB-UniRule"/>
</dbReference>
<dbReference type="GO" id="GO:0008270">
    <property type="term" value="F:zinc ion binding"/>
    <property type="evidence" value="ECO:0007669"/>
    <property type="project" value="UniProtKB-UniRule"/>
</dbReference>
<dbReference type="GO" id="GO:0006730">
    <property type="term" value="P:one-carbon metabolic process"/>
    <property type="evidence" value="ECO:0007669"/>
    <property type="project" value="UniProtKB-UniRule"/>
</dbReference>
<dbReference type="GO" id="GO:0006729">
    <property type="term" value="P:tetrahydrobiopterin biosynthetic process"/>
    <property type="evidence" value="ECO:0007669"/>
    <property type="project" value="TreeGrafter"/>
</dbReference>
<dbReference type="GO" id="GO:0046654">
    <property type="term" value="P:tetrahydrofolate biosynthetic process"/>
    <property type="evidence" value="ECO:0007669"/>
    <property type="project" value="UniProtKB-UniRule"/>
</dbReference>
<dbReference type="FunFam" id="1.10.286.10:FF:000001">
    <property type="entry name" value="GTP cyclohydrolase 1"/>
    <property type="match status" value="1"/>
</dbReference>
<dbReference type="FunFam" id="3.30.1130.10:FF:000001">
    <property type="entry name" value="GTP cyclohydrolase 1"/>
    <property type="match status" value="1"/>
</dbReference>
<dbReference type="Gene3D" id="1.10.286.10">
    <property type="match status" value="1"/>
</dbReference>
<dbReference type="Gene3D" id="3.30.1130.10">
    <property type="match status" value="1"/>
</dbReference>
<dbReference type="HAMAP" id="MF_00223">
    <property type="entry name" value="FolE"/>
    <property type="match status" value="1"/>
</dbReference>
<dbReference type="InterPro" id="IPR043133">
    <property type="entry name" value="GTP-CH-I_C/QueF"/>
</dbReference>
<dbReference type="InterPro" id="IPR043134">
    <property type="entry name" value="GTP-CH-I_N"/>
</dbReference>
<dbReference type="InterPro" id="IPR001474">
    <property type="entry name" value="GTP_CycHdrlase_I"/>
</dbReference>
<dbReference type="InterPro" id="IPR018234">
    <property type="entry name" value="GTP_CycHdrlase_I_CS"/>
</dbReference>
<dbReference type="InterPro" id="IPR020602">
    <property type="entry name" value="GTP_CycHdrlase_I_dom"/>
</dbReference>
<dbReference type="NCBIfam" id="TIGR00063">
    <property type="entry name" value="folE"/>
    <property type="match status" value="1"/>
</dbReference>
<dbReference type="NCBIfam" id="NF006825">
    <property type="entry name" value="PRK09347.1-2"/>
    <property type="match status" value="1"/>
</dbReference>
<dbReference type="NCBIfam" id="NF006826">
    <property type="entry name" value="PRK09347.1-3"/>
    <property type="match status" value="1"/>
</dbReference>
<dbReference type="PANTHER" id="PTHR11109:SF7">
    <property type="entry name" value="GTP CYCLOHYDROLASE 1"/>
    <property type="match status" value="1"/>
</dbReference>
<dbReference type="PANTHER" id="PTHR11109">
    <property type="entry name" value="GTP CYCLOHYDROLASE I"/>
    <property type="match status" value="1"/>
</dbReference>
<dbReference type="Pfam" id="PF01227">
    <property type="entry name" value="GTP_cyclohydroI"/>
    <property type="match status" value="1"/>
</dbReference>
<dbReference type="SUPFAM" id="SSF55620">
    <property type="entry name" value="Tetrahydrobiopterin biosynthesis enzymes-like"/>
    <property type="match status" value="1"/>
</dbReference>
<dbReference type="PROSITE" id="PS00859">
    <property type="entry name" value="GTP_CYCLOHYDROL_1_1"/>
    <property type="match status" value="1"/>
</dbReference>
<dbReference type="PROSITE" id="PS00860">
    <property type="entry name" value="GTP_CYCLOHYDROL_1_2"/>
    <property type="match status" value="1"/>
</dbReference>
<gene>
    <name evidence="2" type="primary">folE</name>
    <name type="ordered locus">A1G_02990</name>
</gene>
<proteinExistence type="inferred from homology"/>
<reference key="1">
    <citation type="submission" date="2007-09" db="EMBL/GenBank/DDBJ databases">
        <title>Complete genome sequence of Rickettsia rickettsii.</title>
        <authorList>
            <person name="Madan A."/>
            <person name="Fahey J."/>
            <person name="Helton E."/>
            <person name="Ketteman M."/>
            <person name="Madan A."/>
            <person name="Rodrigues S."/>
            <person name="Sanchez A."/>
            <person name="Dasch G."/>
            <person name="Eremeeva M."/>
        </authorList>
    </citation>
    <scope>NUCLEOTIDE SEQUENCE [LARGE SCALE GENOMIC DNA]</scope>
    <source>
        <strain>Sheila Smith</strain>
    </source>
</reference>
<evidence type="ECO:0000250" key="1"/>
<evidence type="ECO:0000255" key="2">
    <source>
        <dbReference type="HAMAP-Rule" id="MF_00223"/>
    </source>
</evidence>
<feature type="chain" id="PRO_1000043725" description="GTP cyclohydrolase 1">
    <location>
        <begin position="1"/>
        <end position="189"/>
    </location>
</feature>
<feature type="binding site" evidence="2">
    <location>
        <position position="79"/>
    </location>
    <ligand>
        <name>Zn(2+)</name>
        <dbReference type="ChEBI" id="CHEBI:29105"/>
    </ligand>
</feature>
<feature type="binding site" evidence="2">
    <location>
        <position position="82"/>
    </location>
    <ligand>
        <name>Zn(2+)</name>
        <dbReference type="ChEBI" id="CHEBI:29105"/>
    </ligand>
</feature>
<feature type="binding site" evidence="2">
    <location>
        <position position="150"/>
    </location>
    <ligand>
        <name>Zn(2+)</name>
        <dbReference type="ChEBI" id="CHEBI:29105"/>
    </ligand>
</feature>
<protein>
    <recommendedName>
        <fullName evidence="2">GTP cyclohydrolase 1</fullName>
        <ecNumber evidence="2">3.5.4.16</ecNumber>
    </recommendedName>
    <alternativeName>
        <fullName evidence="2">GTP cyclohydrolase I</fullName>
        <shortName evidence="2">GTP-CH-I</shortName>
    </alternativeName>
</protein>
<organism>
    <name type="scientific">Rickettsia rickettsii (strain Sheila Smith)</name>
    <dbReference type="NCBI Taxonomy" id="392021"/>
    <lineage>
        <taxon>Bacteria</taxon>
        <taxon>Pseudomonadati</taxon>
        <taxon>Pseudomonadota</taxon>
        <taxon>Alphaproteobacteria</taxon>
        <taxon>Rickettsiales</taxon>
        <taxon>Rickettsiaceae</taxon>
        <taxon>Rickettsieae</taxon>
        <taxon>Rickettsia</taxon>
        <taxon>spotted fever group</taxon>
    </lineage>
</organism>
<sequence>MSKPTREEAKEAVRTLLKFIGEDPSREGLLKTPDRVINSYAEIFSGYGKDVAEILNTKFYETCNFRDFILLNIKFTSFCEHHILPFNGTVDIAYVPDNCIVGISKLARIVNIFARRLQIQEKMTVQIAESVQENLKPLGVAVKISAVHSCMSMRGVMQDNSVMNTMHYTGIFAEQQKYRHEFLNLTAKR</sequence>
<accession>A8GRW0</accession>
<keyword id="KW-0342">GTP-binding</keyword>
<keyword id="KW-0378">Hydrolase</keyword>
<keyword id="KW-0479">Metal-binding</keyword>
<keyword id="KW-0547">Nucleotide-binding</keyword>
<keyword id="KW-0554">One-carbon metabolism</keyword>
<keyword id="KW-0862">Zinc</keyword>
<comment type="catalytic activity">
    <reaction evidence="2">
        <text>GTP + H2O = 7,8-dihydroneopterin 3'-triphosphate + formate + H(+)</text>
        <dbReference type="Rhea" id="RHEA:17473"/>
        <dbReference type="ChEBI" id="CHEBI:15377"/>
        <dbReference type="ChEBI" id="CHEBI:15378"/>
        <dbReference type="ChEBI" id="CHEBI:15740"/>
        <dbReference type="ChEBI" id="CHEBI:37565"/>
        <dbReference type="ChEBI" id="CHEBI:58462"/>
        <dbReference type="EC" id="3.5.4.16"/>
    </reaction>
</comment>
<comment type="pathway">
    <text evidence="2">Cofactor biosynthesis; 7,8-dihydroneopterin triphosphate biosynthesis; 7,8-dihydroneopterin triphosphate from GTP: step 1/1.</text>
</comment>
<comment type="subunit">
    <text evidence="1">Toroid-shaped homodecamer, composed of two pentamers of five dimers.</text>
</comment>
<comment type="similarity">
    <text evidence="2">Belongs to the GTP cyclohydrolase I family.</text>
</comment>